<protein>
    <recommendedName>
        <fullName evidence="1">Na(+)/H(+) antiporter NhaA</fullName>
    </recommendedName>
    <alternativeName>
        <fullName evidence="1">Sodium/proton antiporter NhaA</fullName>
    </alternativeName>
</protein>
<gene>
    <name evidence="1" type="primary">nhaA</name>
    <name type="ordered locus">HI_0225</name>
</gene>
<comment type="function">
    <text evidence="1">Na(+)/H(+) antiporter that extrudes sodium in exchange for external protons.</text>
</comment>
<comment type="catalytic activity">
    <reaction evidence="1">
        <text>Na(+)(in) + 2 H(+)(out) = Na(+)(out) + 2 H(+)(in)</text>
        <dbReference type="Rhea" id="RHEA:29251"/>
        <dbReference type="ChEBI" id="CHEBI:15378"/>
        <dbReference type="ChEBI" id="CHEBI:29101"/>
    </reaction>
    <physiologicalReaction direction="left-to-right" evidence="1">
        <dbReference type="Rhea" id="RHEA:29252"/>
    </physiologicalReaction>
</comment>
<comment type="subcellular location">
    <subcellularLocation>
        <location evidence="1">Cell inner membrane</location>
        <topology evidence="1">Multi-pass membrane protein</topology>
    </subcellularLocation>
</comment>
<comment type="similarity">
    <text evidence="1">Belongs to the NhaA Na(+)/H(+) (TC 2.A.33) antiporter family.</text>
</comment>
<evidence type="ECO:0000255" key="1">
    <source>
        <dbReference type="HAMAP-Rule" id="MF_01844"/>
    </source>
</evidence>
<organism>
    <name type="scientific">Haemophilus influenzae (strain ATCC 51907 / DSM 11121 / KW20 / Rd)</name>
    <dbReference type="NCBI Taxonomy" id="71421"/>
    <lineage>
        <taxon>Bacteria</taxon>
        <taxon>Pseudomonadati</taxon>
        <taxon>Pseudomonadota</taxon>
        <taxon>Gammaproteobacteria</taxon>
        <taxon>Pasteurellales</taxon>
        <taxon>Pasteurellaceae</taxon>
        <taxon>Haemophilus</taxon>
    </lineage>
</organism>
<name>NHAA_HAEIN</name>
<dbReference type="EMBL" id="L42023">
    <property type="protein sequence ID" value="AAC21894.1"/>
    <property type="molecule type" value="Genomic_DNA"/>
</dbReference>
<dbReference type="PIR" id="C64056">
    <property type="entry name" value="C64056"/>
</dbReference>
<dbReference type="RefSeq" id="NP_438397.1">
    <property type="nucleotide sequence ID" value="NC_000907.1"/>
</dbReference>
<dbReference type="SMR" id="P44581"/>
<dbReference type="STRING" id="71421.HI_0225"/>
<dbReference type="EnsemblBacteria" id="AAC21894">
    <property type="protein sequence ID" value="AAC21894"/>
    <property type="gene ID" value="HI_0225"/>
</dbReference>
<dbReference type="KEGG" id="hin:HI_0225"/>
<dbReference type="PATRIC" id="fig|71421.8.peg.238"/>
<dbReference type="eggNOG" id="COG3004">
    <property type="taxonomic scope" value="Bacteria"/>
</dbReference>
<dbReference type="HOGENOM" id="CLU_015803_1_0_6"/>
<dbReference type="OrthoDB" id="9808135at2"/>
<dbReference type="PhylomeDB" id="P44581"/>
<dbReference type="BioCyc" id="HINF71421:G1GJ1-242-MONOMER"/>
<dbReference type="Proteomes" id="UP000000579">
    <property type="component" value="Chromosome"/>
</dbReference>
<dbReference type="GO" id="GO:0005886">
    <property type="term" value="C:plasma membrane"/>
    <property type="evidence" value="ECO:0000318"/>
    <property type="project" value="GO_Central"/>
</dbReference>
<dbReference type="GO" id="GO:0015385">
    <property type="term" value="F:sodium:proton antiporter activity"/>
    <property type="evidence" value="ECO:0000318"/>
    <property type="project" value="GO_Central"/>
</dbReference>
<dbReference type="GO" id="GO:0006885">
    <property type="term" value="P:regulation of pH"/>
    <property type="evidence" value="ECO:0007669"/>
    <property type="project" value="InterPro"/>
</dbReference>
<dbReference type="Gene3D" id="1.20.1530.10">
    <property type="entry name" value="Na+/H+ antiporter like domain"/>
    <property type="match status" value="1"/>
</dbReference>
<dbReference type="HAMAP" id="MF_01844">
    <property type="entry name" value="NhaA"/>
    <property type="match status" value="1"/>
</dbReference>
<dbReference type="InterPro" id="IPR023171">
    <property type="entry name" value="Na/H_antiporter_dom_sf"/>
</dbReference>
<dbReference type="InterPro" id="IPR004670">
    <property type="entry name" value="NhaA"/>
</dbReference>
<dbReference type="NCBIfam" id="TIGR00773">
    <property type="entry name" value="NhaA"/>
    <property type="match status" value="1"/>
</dbReference>
<dbReference type="NCBIfam" id="NF007111">
    <property type="entry name" value="PRK09560.1"/>
    <property type="match status" value="1"/>
</dbReference>
<dbReference type="NCBIfam" id="NF007112">
    <property type="entry name" value="PRK09561.1"/>
    <property type="match status" value="1"/>
</dbReference>
<dbReference type="PANTHER" id="PTHR30341:SF0">
    <property type="entry name" value="NA(+)_H(+) ANTIPORTER NHAA"/>
    <property type="match status" value="1"/>
</dbReference>
<dbReference type="PANTHER" id="PTHR30341">
    <property type="entry name" value="SODIUM ION/PROTON ANTIPORTER NHAA-RELATED"/>
    <property type="match status" value="1"/>
</dbReference>
<dbReference type="Pfam" id="PF06965">
    <property type="entry name" value="Na_H_antiport_1"/>
    <property type="match status" value="1"/>
</dbReference>
<reference key="1">
    <citation type="journal article" date="1995" name="Science">
        <title>Whole-genome random sequencing and assembly of Haemophilus influenzae Rd.</title>
        <authorList>
            <person name="Fleischmann R.D."/>
            <person name="Adams M.D."/>
            <person name="White O."/>
            <person name="Clayton R.A."/>
            <person name="Kirkness E.F."/>
            <person name="Kerlavage A.R."/>
            <person name="Bult C.J."/>
            <person name="Tomb J.-F."/>
            <person name="Dougherty B.A."/>
            <person name="Merrick J.M."/>
            <person name="McKenney K."/>
            <person name="Sutton G.G."/>
            <person name="FitzHugh W."/>
            <person name="Fields C.A."/>
            <person name="Gocayne J.D."/>
            <person name="Scott J.D."/>
            <person name="Shirley R."/>
            <person name="Liu L.-I."/>
            <person name="Glodek A."/>
            <person name="Kelley J.M."/>
            <person name="Weidman J.F."/>
            <person name="Phillips C.A."/>
            <person name="Spriggs T."/>
            <person name="Hedblom E."/>
            <person name="Cotton M.D."/>
            <person name="Utterback T.R."/>
            <person name="Hanna M.C."/>
            <person name="Nguyen D.T."/>
            <person name="Saudek D.M."/>
            <person name="Brandon R.C."/>
            <person name="Fine L.D."/>
            <person name="Fritchman J.L."/>
            <person name="Fuhrmann J.L."/>
            <person name="Geoghagen N.S.M."/>
            <person name="Gnehm C.L."/>
            <person name="McDonald L.A."/>
            <person name="Small K.V."/>
            <person name="Fraser C.M."/>
            <person name="Smith H.O."/>
            <person name="Venter J.C."/>
        </authorList>
    </citation>
    <scope>NUCLEOTIDE SEQUENCE [LARGE SCALE GENOMIC DNA]</scope>
    <source>
        <strain>ATCC 51907 / DSM 11121 / KW20 / Rd</strain>
    </source>
</reference>
<keyword id="KW-0050">Antiport</keyword>
<keyword id="KW-0997">Cell inner membrane</keyword>
<keyword id="KW-1003">Cell membrane</keyword>
<keyword id="KW-0406">Ion transport</keyword>
<keyword id="KW-0472">Membrane</keyword>
<keyword id="KW-1185">Reference proteome</keyword>
<keyword id="KW-0915">Sodium</keyword>
<keyword id="KW-0739">Sodium transport</keyword>
<keyword id="KW-0812">Transmembrane</keyword>
<keyword id="KW-1133">Transmembrane helix</keyword>
<keyword id="KW-0813">Transport</keyword>
<sequence length="400" mass="42763">MNFLLCIFKGVYVIKLIQRFFKLESAGGILLLFSAVVAMLLANSPLSNQYNDFLNLPVSLQIGSFSINKTLIHWINDGFMAVFFVLVGMEVKKELFEGALSTYQQAIFPAIAAIGGMVIPAVVYWFIAKQDPSLANGWAIPMATDIAFALGIMALLSKQVPLPLKIFLLALAIIDDLGAIVVIALFFSHGLSVQALIFSAVAIIVLILLNRFRVSALCAYMVVGAILWASVLKSGVHATLAGVIIGFSIPLKGKKGERPLDDFEHILASWSSFVILPLFAFANAGVSFAGIDVNMISSPLLLAIASGLIIGKPVGIFGFSYISVKLGLAKLPDGINFKQIFAVAVLCGIGFTMSMFLASLAFDANAGESVNTLSRLGILLGSTVSAILGYLFLKQTTKLN</sequence>
<accession>P44581</accession>
<feature type="chain" id="PRO_0000052411" description="Na(+)/H(+) antiporter NhaA">
    <location>
        <begin position="1"/>
        <end position="400"/>
    </location>
</feature>
<feature type="transmembrane region" description="Helical" evidence="1">
    <location>
        <begin position="26"/>
        <end position="46"/>
    </location>
</feature>
<feature type="transmembrane region" description="Helical" evidence="1">
    <location>
        <begin position="71"/>
        <end position="91"/>
    </location>
</feature>
<feature type="transmembrane region" description="Helical" evidence="1">
    <location>
        <begin position="107"/>
        <end position="127"/>
    </location>
</feature>
<feature type="transmembrane region" description="Helical" evidence="1">
    <location>
        <begin position="137"/>
        <end position="157"/>
    </location>
</feature>
<feature type="transmembrane region" description="Helical" evidence="1">
    <location>
        <begin position="166"/>
        <end position="186"/>
    </location>
</feature>
<feature type="transmembrane region" description="Helical" evidence="1">
    <location>
        <begin position="189"/>
        <end position="209"/>
    </location>
</feature>
<feature type="transmembrane region" description="Helical" evidence="1">
    <location>
        <begin position="225"/>
        <end position="245"/>
    </location>
</feature>
<feature type="transmembrane region" description="Helical" evidence="1">
    <location>
        <begin position="273"/>
        <end position="293"/>
    </location>
</feature>
<feature type="transmembrane region" description="Helical" evidence="1">
    <location>
        <begin position="299"/>
        <end position="319"/>
    </location>
</feature>
<feature type="transmembrane region" description="Helical" evidence="1">
    <location>
        <begin position="340"/>
        <end position="360"/>
    </location>
</feature>
<feature type="transmembrane region" description="Helical" evidence="1">
    <location>
        <begin position="373"/>
        <end position="393"/>
    </location>
</feature>
<proteinExistence type="inferred from homology"/>